<evidence type="ECO:0000255" key="1"/>
<evidence type="ECO:0000305" key="2"/>
<protein>
    <recommendedName>
        <fullName>ATP synthase subunit a</fullName>
    </recommendedName>
    <alternativeName>
        <fullName>F-ATPase protein 6</fullName>
    </alternativeName>
</protein>
<feature type="chain" id="PRO_0000082107" description="ATP synthase subunit a">
    <location>
        <begin position="1"/>
        <end position="253"/>
    </location>
</feature>
<feature type="transmembrane region" description="Helical" evidence="1">
    <location>
        <begin position="34"/>
        <end position="54"/>
    </location>
</feature>
<feature type="transmembrane region" description="Helical" evidence="1">
    <location>
        <begin position="89"/>
        <end position="109"/>
    </location>
</feature>
<feature type="transmembrane region" description="Helical" evidence="1">
    <location>
        <begin position="118"/>
        <end position="138"/>
    </location>
</feature>
<feature type="transmembrane region" description="Helical" evidence="1">
    <location>
        <begin position="156"/>
        <end position="178"/>
    </location>
</feature>
<feature type="transmembrane region" description="Helical" evidence="1">
    <location>
        <begin position="203"/>
        <end position="223"/>
    </location>
</feature>
<feature type="transmembrane region" description="Helical" evidence="1">
    <location>
        <begin position="226"/>
        <end position="246"/>
    </location>
</feature>
<comment type="function">
    <text>Mitochondrial membrane ATP synthase (F(1)F(0) ATP synthase or Complex V) produces ATP from ADP in the presence of a proton gradient across the membrane which is generated by electron transport complexes of the respiratory chain. F-type ATPases consist of two structural domains, F(1) - containing the extramembraneous catalytic core and F(0) - containing the membrane proton channel, linked together by a central stalk and a peripheral stalk. During catalysis, ATP synthesis in the catalytic domain of F(1) is coupled via a rotary mechanism of the central stalk subunits to proton translocation. Key component of the proton channel; it may play a direct role in the translocation of protons across the membrane.</text>
</comment>
<comment type="subunit">
    <text>F-type ATPases have 2 components, CF(1) - the catalytic core - and CF(0) - the membrane proton channel. CF(1) has five subunits: alpha(3), beta(3), gamma(1), delta(1), epsilon(1). CF(0) has three main subunits: a, b and c.</text>
</comment>
<comment type="subcellular location">
    <subcellularLocation>
        <location>Mitochondrion inner membrane</location>
        <topology>Multi-pass membrane protein</topology>
    </subcellularLocation>
</comment>
<comment type="similarity">
    <text evidence="2">Belongs to the ATPase A chain family.</text>
</comment>
<geneLocation type="mitochondrion"/>
<proteinExistence type="inferred from homology"/>
<keyword id="KW-0066">ATP synthesis</keyword>
<keyword id="KW-0138">CF(0)</keyword>
<keyword id="KW-0375">Hydrogen ion transport</keyword>
<keyword id="KW-0406">Ion transport</keyword>
<keyword id="KW-0472">Membrane</keyword>
<keyword id="KW-0496">Mitochondrion</keyword>
<keyword id="KW-0999">Mitochondrion inner membrane</keyword>
<keyword id="KW-0812">Transmembrane</keyword>
<keyword id="KW-1133">Transmembrane helix</keyword>
<keyword id="KW-0813">Transport</keyword>
<reference key="1">
    <citation type="journal article" date="1995" name="J. Mol. Biol.">
        <title>Complete sequence of the mitochondrial DNA of the rhodophyte Chondrus crispus (Gigartinales). Gene content and genome organization.</title>
        <authorList>
            <person name="Leblanc C."/>
            <person name="Boyen C."/>
            <person name="Richard O."/>
            <person name="Bonnard G."/>
            <person name="Grienenberger J.-M."/>
            <person name="Kloareg B."/>
        </authorList>
    </citation>
    <scope>NUCLEOTIDE SEQUENCE [GENOMIC DNA]</scope>
    <source>
        <tissue>Apices</tissue>
    </source>
</reference>
<gene>
    <name type="primary">ATP6</name>
</gene>
<name>ATP6_CHOCR</name>
<organism>
    <name type="scientific">Chondrus crispus</name>
    <name type="common">Carrageen Irish moss</name>
    <name type="synonym">Polymorpha crispa</name>
    <dbReference type="NCBI Taxonomy" id="2769"/>
    <lineage>
        <taxon>Eukaryota</taxon>
        <taxon>Rhodophyta</taxon>
        <taxon>Florideophyceae</taxon>
        <taxon>Rhodymeniophycidae</taxon>
        <taxon>Gigartinales</taxon>
        <taxon>Gigartinaceae</taxon>
        <taxon>Chondrus</taxon>
    </lineage>
</organism>
<sequence>MQTHFIITSPLEQFEIVTIFPFSISGLNFSLTNSSLFLIIAVFLLLFWTSLSFYSNTLIPNNWQLVKESIYEITASMVQDNLGSKGEFYFPFIFTLHLLLLYCNLIGMIPYSFTVTSHIVFTFGLALSIFIGINLIGIQTHGFKFFALFLPRGVPLAIVPLLITIEFLSYIVKVFTLSIRLFANMTSGHTLLKIIAGFAWTMLSAGGLLAIFHLIPLALLLALTGLELAIAGLQAYVFTLLTCIYLNDVLDMH</sequence>
<dbReference type="EMBL" id="Z47547">
    <property type="protein sequence ID" value="CAA87628.1"/>
    <property type="molecule type" value="Genomic_DNA"/>
</dbReference>
<dbReference type="PIR" id="S59112">
    <property type="entry name" value="S59112"/>
</dbReference>
<dbReference type="RefSeq" id="NP_062499.1">
    <property type="nucleotide sequence ID" value="NC_001677.2"/>
</dbReference>
<dbReference type="SMR" id="P48878"/>
<dbReference type="GeneID" id="809378"/>
<dbReference type="KEGG" id="ccp:ChcroMp20"/>
<dbReference type="GO" id="GO:0005743">
    <property type="term" value="C:mitochondrial inner membrane"/>
    <property type="evidence" value="ECO:0007669"/>
    <property type="project" value="UniProtKB-SubCell"/>
</dbReference>
<dbReference type="GO" id="GO:0045259">
    <property type="term" value="C:proton-transporting ATP synthase complex"/>
    <property type="evidence" value="ECO:0007669"/>
    <property type="project" value="UniProtKB-KW"/>
</dbReference>
<dbReference type="GO" id="GO:0046933">
    <property type="term" value="F:proton-transporting ATP synthase activity, rotational mechanism"/>
    <property type="evidence" value="ECO:0007669"/>
    <property type="project" value="TreeGrafter"/>
</dbReference>
<dbReference type="CDD" id="cd00310">
    <property type="entry name" value="ATP-synt_Fo_a_6"/>
    <property type="match status" value="1"/>
</dbReference>
<dbReference type="FunFam" id="1.20.120.220:FF:000003">
    <property type="entry name" value="ATP synthase subunit a"/>
    <property type="match status" value="1"/>
</dbReference>
<dbReference type="Gene3D" id="1.20.120.220">
    <property type="entry name" value="ATP synthase, F0 complex, subunit A"/>
    <property type="match status" value="1"/>
</dbReference>
<dbReference type="HAMAP" id="MF_01393">
    <property type="entry name" value="ATP_synth_a_bact"/>
    <property type="match status" value="1"/>
</dbReference>
<dbReference type="InterPro" id="IPR000568">
    <property type="entry name" value="ATP_synth_F0_asu"/>
</dbReference>
<dbReference type="InterPro" id="IPR023011">
    <property type="entry name" value="ATP_synth_F0_asu_AS"/>
</dbReference>
<dbReference type="InterPro" id="IPR045083">
    <property type="entry name" value="ATP_synth_F0_asu_bact/mt"/>
</dbReference>
<dbReference type="InterPro" id="IPR035908">
    <property type="entry name" value="F0_ATP_A_sf"/>
</dbReference>
<dbReference type="NCBIfam" id="TIGR01131">
    <property type="entry name" value="ATP_synt_6_or_A"/>
    <property type="match status" value="1"/>
</dbReference>
<dbReference type="NCBIfam" id="NF004482">
    <property type="entry name" value="PRK05815.2-4"/>
    <property type="match status" value="1"/>
</dbReference>
<dbReference type="PANTHER" id="PTHR11410">
    <property type="entry name" value="ATP SYNTHASE SUBUNIT A"/>
    <property type="match status" value="1"/>
</dbReference>
<dbReference type="PANTHER" id="PTHR11410:SF0">
    <property type="entry name" value="ATP SYNTHASE SUBUNIT A"/>
    <property type="match status" value="1"/>
</dbReference>
<dbReference type="Pfam" id="PF00119">
    <property type="entry name" value="ATP-synt_A"/>
    <property type="match status" value="1"/>
</dbReference>
<dbReference type="PRINTS" id="PR00123">
    <property type="entry name" value="ATPASEA"/>
</dbReference>
<dbReference type="SUPFAM" id="SSF81336">
    <property type="entry name" value="F1F0 ATP synthase subunit A"/>
    <property type="match status" value="1"/>
</dbReference>
<dbReference type="PROSITE" id="PS00449">
    <property type="entry name" value="ATPASE_A"/>
    <property type="match status" value="1"/>
</dbReference>
<accession>P48878</accession>